<dbReference type="EC" id="2.5.1.7" evidence="1"/>
<dbReference type="EMBL" id="AE004969">
    <property type="protein sequence ID" value="AAW90531.1"/>
    <property type="molecule type" value="Genomic_DNA"/>
</dbReference>
<dbReference type="RefSeq" id="WP_003688069.1">
    <property type="nucleotide sequence ID" value="NC_002946.2"/>
</dbReference>
<dbReference type="RefSeq" id="YP_208943.1">
    <property type="nucleotide sequence ID" value="NC_002946.2"/>
</dbReference>
<dbReference type="SMR" id="Q5F5K6"/>
<dbReference type="STRING" id="242231.NGO_1918"/>
<dbReference type="GeneID" id="66754198"/>
<dbReference type="KEGG" id="ngo:NGO_1918"/>
<dbReference type="PATRIC" id="fig|242231.10.peg.2313"/>
<dbReference type="HOGENOM" id="CLU_027387_0_0_4"/>
<dbReference type="UniPathway" id="UPA00219"/>
<dbReference type="Proteomes" id="UP000000535">
    <property type="component" value="Chromosome"/>
</dbReference>
<dbReference type="GO" id="GO:0005737">
    <property type="term" value="C:cytoplasm"/>
    <property type="evidence" value="ECO:0007669"/>
    <property type="project" value="UniProtKB-SubCell"/>
</dbReference>
<dbReference type="GO" id="GO:0008760">
    <property type="term" value="F:UDP-N-acetylglucosamine 1-carboxyvinyltransferase activity"/>
    <property type="evidence" value="ECO:0007669"/>
    <property type="project" value="UniProtKB-UniRule"/>
</dbReference>
<dbReference type="GO" id="GO:0051301">
    <property type="term" value="P:cell division"/>
    <property type="evidence" value="ECO:0007669"/>
    <property type="project" value="UniProtKB-KW"/>
</dbReference>
<dbReference type="GO" id="GO:0071555">
    <property type="term" value="P:cell wall organization"/>
    <property type="evidence" value="ECO:0007669"/>
    <property type="project" value="UniProtKB-KW"/>
</dbReference>
<dbReference type="GO" id="GO:0009252">
    <property type="term" value="P:peptidoglycan biosynthetic process"/>
    <property type="evidence" value="ECO:0007669"/>
    <property type="project" value="UniProtKB-UniRule"/>
</dbReference>
<dbReference type="GO" id="GO:0008360">
    <property type="term" value="P:regulation of cell shape"/>
    <property type="evidence" value="ECO:0007669"/>
    <property type="project" value="UniProtKB-KW"/>
</dbReference>
<dbReference type="GO" id="GO:0019277">
    <property type="term" value="P:UDP-N-acetylgalactosamine biosynthetic process"/>
    <property type="evidence" value="ECO:0007669"/>
    <property type="project" value="InterPro"/>
</dbReference>
<dbReference type="CDD" id="cd01555">
    <property type="entry name" value="UdpNAET"/>
    <property type="match status" value="1"/>
</dbReference>
<dbReference type="FunFam" id="3.65.10.10:FF:000002">
    <property type="entry name" value="UDP-N-acetylglucosamine 1-carboxyvinyltransferase"/>
    <property type="match status" value="1"/>
</dbReference>
<dbReference type="Gene3D" id="3.65.10.10">
    <property type="entry name" value="Enolpyruvate transferase domain"/>
    <property type="match status" value="2"/>
</dbReference>
<dbReference type="HAMAP" id="MF_00111">
    <property type="entry name" value="MurA"/>
    <property type="match status" value="1"/>
</dbReference>
<dbReference type="InterPro" id="IPR001986">
    <property type="entry name" value="Enolpyruvate_Tfrase_dom"/>
</dbReference>
<dbReference type="InterPro" id="IPR036968">
    <property type="entry name" value="Enolpyruvate_Tfrase_sf"/>
</dbReference>
<dbReference type="InterPro" id="IPR050068">
    <property type="entry name" value="MurA_subfamily"/>
</dbReference>
<dbReference type="InterPro" id="IPR013792">
    <property type="entry name" value="RNA3'P_cycl/enolpyr_Trfase_a/b"/>
</dbReference>
<dbReference type="InterPro" id="IPR005750">
    <property type="entry name" value="UDP_GlcNAc_COvinyl_MurA"/>
</dbReference>
<dbReference type="NCBIfam" id="TIGR01072">
    <property type="entry name" value="murA"/>
    <property type="match status" value="1"/>
</dbReference>
<dbReference type="NCBIfam" id="NF006873">
    <property type="entry name" value="PRK09369.1"/>
    <property type="match status" value="1"/>
</dbReference>
<dbReference type="PANTHER" id="PTHR43783">
    <property type="entry name" value="UDP-N-ACETYLGLUCOSAMINE 1-CARBOXYVINYLTRANSFERASE"/>
    <property type="match status" value="1"/>
</dbReference>
<dbReference type="PANTHER" id="PTHR43783:SF1">
    <property type="entry name" value="UDP-N-ACETYLGLUCOSAMINE 1-CARBOXYVINYLTRANSFERASE"/>
    <property type="match status" value="1"/>
</dbReference>
<dbReference type="Pfam" id="PF00275">
    <property type="entry name" value="EPSP_synthase"/>
    <property type="match status" value="1"/>
</dbReference>
<dbReference type="SUPFAM" id="SSF55205">
    <property type="entry name" value="EPT/RTPC-like"/>
    <property type="match status" value="1"/>
</dbReference>
<proteinExistence type="inferred from homology"/>
<comment type="function">
    <text evidence="1">Cell wall formation. Adds enolpyruvyl to UDP-N-acetylglucosamine.</text>
</comment>
<comment type="catalytic activity">
    <reaction evidence="1">
        <text>phosphoenolpyruvate + UDP-N-acetyl-alpha-D-glucosamine = UDP-N-acetyl-3-O-(1-carboxyvinyl)-alpha-D-glucosamine + phosphate</text>
        <dbReference type="Rhea" id="RHEA:18681"/>
        <dbReference type="ChEBI" id="CHEBI:43474"/>
        <dbReference type="ChEBI" id="CHEBI:57705"/>
        <dbReference type="ChEBI" id="CHEBI:58702"/>
        <dbReference type="ChEBI" id="CHEBI:68483"/>
        <dbReference type="EC" id="2.5.1.7"/>
    </reaction>
</comment>
<comment type="pathway">
    <text evidence="1">Cell wall biogenesis; peptidoglycan biosynthesis.</text>
</comment>
<comment type="subcellular location">
    <subcellularLocation>
        <location evidence="1">Cytoplasm</location>
    </subcellularLocation>
</comment>
<comment type="similarity">
    <text evidence="1">Belongs to the EPSP synthase family. MurA subfamily.</text>
</comment>
<sequence>MDKLKISANGPLNGEITVSGAKNAALPLMCAGLLTSGTLRLKNVPMLADVATTQKLLQGMGARVLTDNISEFEINGGTVNNTCAPYELVRTMRASILVLGPTLARFGEAQVSLPGGCAIGSRPVNQHLKGLEAMGAEIAIEHGYVKAKGKLKGARVAMDVVTVGGTENLLMAATLAEGTTVLENCAIEPEVVDLAECLVKMGAKISGIGTSTMIVEGAGELYGCEHSVVPDRIEAGTFLCAVAITGGRVVLRNAAPKTMEVVLDKLVEAGAVIEAGDDWIAIDMRQRPKAVDIRTVVHPGFPTDMQAQFMALNAVAEGSCRVVETIFENRFMHVPELNRMGANITTEGNTAFVQGVERLSGAVVKATDLRASASLVIAGLAARGETVVERIYHLDRGYENIEKKLGSVGANIERVSG</sequence>
<reference key="1">
    <citation type="submission" date="2003-03" db="EMBL/GenBank/DDBJ databases">
        <title>The complete genome sequence of Neisseria gonorrhoeae.</title>
        <authorList>
            <person name="Lewis L.A."/>
            <person name="Gillaspy A.F."/>
            <person name="McLaughlin R.E."/>
            <person name="Gipson M."/>
            <person name="Ducey T.F."/>
            <person name="Ownbey T."/>
            <person name="Hartman K."/>
            <person name="Nydick C."/>
            <person name="Carson M.B."/>
            <person name="Vaughn J."/>
            <person name="Thomson C."/>
            <person name="Song L."/>
            <person name="Lin S."/>
            <person name="Yuan X."/>
            <person name="Najar F."/>
            <person name="Zhan M."/>
            <person name="Ren Q."/>
            <person name="Zhu H."/>
            <person name="Qi S."/>
            <person name="Kenton S.M."/>
            <person name="Lai H."/>
            <person name="White J.D."/>
            <person name="Clifton S."/>
            <person name="Roe B.A."/>
            <person name="Dyer D.W."/>
        </authorList>
    </citation>
    <scope>NUCLEOTIDE SEQUENCE [LARGE SCALE GENOMIC DNA]</scope>
    <source>
        <strain>ATCC 700825 / FA 1090</strain>
    </source>
</reference>
<feature type="chain" id="PRO_0000231225" description="UDP-N-acetylglucosamine 1-carboxyvinyltransferase">
    <location>
        <begin position="1"/>
        <end position="417"/>
    </location>
</feature>
<feature type="active site" description="Proton donor" evidence="1">
    <location>
        <position position="117"/>
    </location>
</feature>
<feature type="binding site" evidence="1">
    <location>
        <begin position="22"/>
        <end position="23"/>
    </location>
    <ligand>
        <name>phosphoenolpyruvate</name>
        <dbReference type="ChEBI" id="CHEBI:58702"/>
    </ligand>
</feature>
<feature type="binding site" evidence="1">
    <location>
        <position position="93"/>
    </location>
    <ligand>
        <name>UDP-N-acetyl-alpha-D-glucosamine</name>
        <dbReference type="ChEBI" id="CHEBI:57705"/>
    </ligand>
</feature>
<feature type="binding site" evidence="1">
    <location>
        <position position="304"/>
    </location>
    <ligand>
        <name>UDP-N-acetyl-alpha-D-glucosamine</name>
        <dbReference type="ChEBI" id="CHEBI:57705"/>
    </ligand>
</feature>
<feature type="binding site" evidence="1">
    <location>
        <position position="326"/>
    </location>
    <ligand>
        <name>UDP-N-acetyl-alpha-D-glucosamine</name>
        <dbReference type="ChEBI" id="CHEBI:57705"/>
    </ligand>
</feature>
<feature type="modified residue" description="2-(S-cysteinyl)pyruvic acid O-phosphothioketal" evidence="1">
    <location>
        <position position="117"/>
    </location>
</feature>
<evidence type="ECO:0000255" key="1">
    <source>
        <dbReference type="HAMAP-Rule" id="MF_00111"/>
    </source>
</evidence>
<organism>
    <name type="scientific">Neisseria gonorrhoeae (strain ATCC 700825 / FA 1090)</name>
    <dbReference type="NCBI Taxonomy" id="242231"/>
    <lineage>
        <taxon>Bacteria</taxon>
        <taxon>Pseudomonadati</taxon>
        <taxon>Pseudomonadota</taxon>
        <taxon>Betaproteobacteria</taxon>
        <taxon>Neisseriales</taxon>
        <taxon>Neisseriaceae</taxon>
        <taxon>Neisseria</taxon>
    </lineage>
</organism>
<keyword id="KW-0131">Cell cycle</keyword>
<keyword id="KW-0132">Cell division</keyword>
<keyword id="KW-0133">Cell shape</keyword>
<keyword id="KW-0961">Cell wall biogenesis/degradation</keyword>
<keyword id="KW-0963">Cytoplasm</keyword>
<keyword id="KW-0573">Peptidoglycan synthesis</keyword>
<keyword id="KW-0670">Pyruvate</keyword>
<keyword id="KW-1185">Reference proteome</keyword>
<keyword id="KW-0808">Transferase</keyword>
<name>MURA_NEIG1</name>
<accession>Q5F5K6</accession>
<protein>
    <recommendedName>
        <fullName evidence="1">UDP-N-acetylglucosamine 1-carboxyvinyltransferase</fullName>
        <ecNumber evidence="1">2.5.1.7</ecNumber>
    </recommendedName>
    <alternativeName>
        <fullName evidence="1">Enoylpyruvate transferase</fullName>
    </alternativeName>
    <alternativeName>
        <fullName evidence="1">UDP-N-acetylglucosamine enolpyruvyl transferase</fullName>
        <shortName evidence="1">EPT</shortName>
    </alternativeName>
</protein>
<gene>
    <name evidence="1" type="primary">murA</name>
    <name type="ordered locus">NGO_1918</name>
</gene>